<protein>
    <recommendedName>
        <fullName evidence="1">Phosphoribosylaminoimidazole-succinocarboxamide synthase</fullName>
        <ecNumber evidence="1">6.3.2.6</ecNumber>
    </recommendedName>
    <alternativeName>
        <fullName evidence="1">SAICAR synthetase</fullName>
    </alternativeName>
</protein>
<feature type="chain" id="PRO_0000100835" description="Phosphoribosylaminoimidazole-succinocarboxamide synthase">
    <location>
        <begin position="1"/>
        <end position="243"/>
    </location>
</feature>
<reference key="1">
    <citation type="journal article" date="2003" name="Proc. Natl. Acad. Sci. U.S.A.">
        <title>Complete genome sequence of Lactobacillus plantarum WCFS1.</title>
        <authorList>
            <person name="Kleerebezem M."/>
            <person name="Boekhorst J."/>
            <person name="van Kranenburg R."/>
            <person name="Molenaar D."/>
            <person name="Kuipers O.P."/>
            <person name="Leer R."/>
            <person name="Tarchini R."/>
            <person name="Peters S.A."/>
            <person name="Sandbrink H.M."/>
            <person name="Fiers M.W.E.J."/>
            <person name="Stiekema W."/>
            <person name="Klein Lankhorst R.M."/>
            <person name="Bron P.A."/>
            <person name="Hoffer S.M."/>
            <person name="Nierop Groot M.N."/>
            <person name="Kerkhoven R."/>
            <person name="De Vries M."/>
            <person name="Ursing B."/>
            <person name="De Vos W.M."/>
            <person name="Siezen R.J."/>
        </authorList>
    </citation>
    <scope>NUCLEOTIDE SEQUENCE [LARGE SCALE GENOMIC DNA]</scope>
    <source>
        <strain>ATCC BAA-793 / NCIMB 8826 / WCFS1</strain>
    </source>
</reference>
<reference key="2">
    <citation type="journal article" date="2012" name="J. Bacteriol.">
        <title>Complete resequencing and reannotation of the Lactobacillus plantarum WCFS1 genome.</title>
        <authorList>
            <person name="Siezen R.J."/>
            <person name="Francke C."/>
            <person name="Renckens B."/>
            <person name="Boekhorst J."/>
            <person name="Wels M."/>
            <person name="Kleerebezem M."/>
            <person name="van Hijum S.A."/>
        </authorList>
    </citation>
    <scope>NUCLEOTIDE SEQUENCE [LARGE SCALE GENOMIC DNA]</scope>
    <scope>GENOME REANNOTATION</scope>
    <source>
        <strain>ATCC BAA-793 / NCIMB 8826 / WCFS1</strain>
    </source>
</reference>
<proteinExistence type="inferred from homology"/>
<comment type="catalytic activity">
    <reaction evidence="1">
        <text>5-amino-1-(5-phospho-D-ribosyl)imidazole-4-carboxylate + L-aspartate + ATP = (2S)-2-[5-amino-1-(5-phospho-beta-D-ribosyl)imidazole-4-carboxamido]succinate + ADP + phosphate + 2 H(+)</text>
        <dbReference type="Rhea" id="RHEA:22628"/>
        <dbReference type="ChEBI" id="CHEBI:15378"/>
        <dbReference type="ChEBI" id="CHEBI:29991"/>
        <dbReference type="ChEBI" id="CHEBI:30616"/>
        <dbReference type="ChEBI" id="CHEBI:43474"/>
        <dbReference type="ChEBI" id="CHEBI:58443"/>
        <dbReference type="ChEBI" id="CHEBI:77657"/>
        <dbReference type="ChEBI" id="CHEBI:456216"/>
        <dbReference type="EC" id="6.3.2.6"/>
    </reaction>
</comment>
<comment type="pathway">
    <text evidence="1">Purine metabolism; IMP biosynthesis via de novo pathway; 5-amino-1-(5-phospho-D-ribosyl)imidazole-4-carboxamide from 5-amino-1-(5-phospho-D-ribosyl)imidazole-4-carboxylate: step 1/2.</text>
</comment>
<comment type="similarity">
    <text evidence="1">Belongs to the SAICAR synthetase family.</text>
</comment>
<dbReference type="EC" id="6.3.2.6" evidence="1"/>
<dbReference type="EMBL" id="AL935263">
    <property type="protein sequence ID" value="CCC79842.1"/>
    <property type="molecule type" value="Genomic_DNA"/>
</dbReference>
<dbReference type="RefSeq" id="WP_003642587.1">
    <property type="nucleotide sequence ID" value="NC_004567.2"/>
</dbReference>
<dbReference type="RefSeq" id="YP_004890356.1">
    <property type="nucleotide sequence ID" value="NC_004567.2"/>
</dbReference>
<dbReference type="SMR" id="Q88U22"/>
<dbReference type="STRING" id="220668.lp_2727"/>
<dbReference type="EnsemblBacteria" id="CCC79842">
    <property type="protein sequence ID" value="CCC79842"/>
    <property type="gene ID" value="lp_2727"/>
</dbReference>
<dbReference type="GeneID" id="89669957"/>
<dbReference type="KEGG" id="lpl:lp_2727"/>
<dbReference type="PATRIC" id="fig|220668.9.peg.2282"/>
<dbReference type="eggNOG" id="COG0152">
    <property type="taxonomic scope" value="Bacteria"/>
</dbReference>
<dbReference type="HOGENOM" id="CLU_061495_2_0_9"/>
<dbReference type="OrthoDB" id="9801549at2"/>
<dbReference type="PhylomeDB" id="Q88U22"/>
<dbReference type="UniPathway" id="UPA00074">
    <property type="reaction ID" value="UER00131"/>
</dbReference>
<dbReference type="Proteomes" id="UP000000432">
    <property type="component" value="Chromosome"/>
</dbReference>
<dbReference type="GO" id="GO:0005524">
    <property type="term" value="F:ATP binding"/>
    <property type="evidence" value="ECO:0007669"/>
    <property type="project" value="UniProtKB-KW"/>
</dbReference>
<dbReference type="GO" id="GO:0004639">
    <property type="term" value="F:phosphoribosylaminoimidazolesuccinocarboxamide synthase activity"/>
    <property type="evidence" value="ECO:0007669"/>
    <property type="project" value="UniProtKB-UniRule"/>
</dbReference>
<dbReference type="GO" id="GO:0006189">
    <property type="term" value="P:'de novo' IMP biosynthetic process"/>
    <property type="evidence" value="ECO:0007669"/>
    <property type="project" value="UniProtKB-UniRule"/>
</dbReference>
<dbReference type="GO" id="GO:0009236">
    <property type="term" value="P:cobalamin biosynthetic process"/>
    <property type="evidence" value="ECO:0007669"/>
    <property type="project" value="InterPro"/>
</dbReference>
<dbReference type="CDD" id="cd01415">
    <property type="entry name" value="SAICAR_synt_PurC"/>
    <property type="match status" value="1"/>
</dbReference>
<dbReference type="FunFam" id="3.30.470.20:FF:000006">
    <property type="entry name" value="Phosphoribosylaminoimidazole-succinocarboxamide synthase"/>
    <property type="match status" value="1"/>
</dbReference>
<dbReference type="Gene3D" id="3.30.470.20">
    <property type="entry name" value="ATP-grasp fold, B domain"/>
    <property type="match status" value="1"/>
</dbReference>
<dbReference type="Gene3D" id="3.30.200.20">
    <property type="entry name" value="Phosphorylase Kinase, domain 1"/>
    <property type="match status" value="1"/>
</dbReference>
<dbReference type="HAMAP" id="MF_00137">
    <property type="entry name" value="SAICAR_synth"/>
    <property type="match status" value="1"/>
</dbReference>
<dbReference type="InterPro" id="IPR028923">
    <property type="entry name" value="SAICAR_synt/ADE2_N"/>
</dbReference>
<dbReference type="InterPro" id="IPR033934">
    <property type="entry name" value="SAICAR_synt_PurC"/>
</dbReference>
<dbReference type="InterPro" id="IPR001636">
    <property type="entry name" value="SAICAR_synth"/>
</dbReference>
<dbReference type="InterPro" id="IPR050089">
    <property type="entry name" value="SAICAR_synthetase"/>
</dbReference>
<dbReference type="InterPro" id="IPR018236">
    <property type="entry name" value="SAICAR_synthetase_CS"/>
</dbReference>
<dbReference type="NCBIfam" id="TIGR00081">
    <property type="entry name" value="purC"/>
    <property type="match status" value="1"/>
</dbReference>
<dbReference type="PANTHER" id="PTHR43599">
    <property type="entry name" value="MULTIFUNCTIONAL PROTEIN ADE2"/>
    <property type="match status" value="1"/>
</dbReference>
<dbReference type="PANTHER" id="PTHR43599:SF3">
    <property type="entry name" value="SI:DKEY-6E2.2"/>
    <property type="match status" value="1"/>
</dbReference>
<dbReference type="Pfam" id="PF01259">
    <property type="entry name" value="SAICAR_synt"/>
    <property type="match status" value="1"/>
</dbReference>
<dbReference type="SUPFAM" id="SSF56104">
    <property type="entry name" value="SAICAR synthase-like"/>
    <property type="match status" value="1"/>
</dbReference>
<dbReference type="PROSITE" id="PS01057">
    <property type="entry name" value="SAICAR_SYNTHETASE_1"/>
    <property type="match status" value="1"/>
</dbReference>
<dbReference type="PROSITE" id="PS01058">
    <property type="entry name" value="SAICAR_SYNTHETASE_2"/>
    <property type="match status" value="1"/>
</dbReference>
<name>PUR7_LACPL</name>
<accession>Q88U22</accession>
<accession>F9URK3</accession>
<keyword id="KW-0067">ATP-binding</keyword>
<keyword id="KW-0436">Ligase</keyword>
<keyword id="KW-0547">Nucleotide-binding</keyword>
<keyword id="KW-0658">Purine biosynthesis</keyword>
<keyword id="KW-1185">Reference proteome</keyword>
<sequence length="243" mass="27081">MTAAIEKQALLYTGKAKAMYATNDPEILWVEYLDQATALNGKRKVPIDQKGRLNNRIASLIFKDLANHGIANHFIEQPSDYVQLVRRVTMIPLETVVRNAASGSFERKFAVPHLTKFAEPVLEFFYKSDQLDDPFINDSQIHALNVATPAIVAEIKRQALQVNQRLTAIFAAMGVQLVDFKIEFGLTTTGKVLLADEISPDSCRLVDLKTGASLDKDVFRKDLGDLTSVYQEVLTRLATVEEA</sequence>
<gene>
    <name evidence="1" type="primary">purC</name>
    <name type="ordered locus">lp_2727</name>
</gene>
<evidence type="ECO:0000255" key="1">
    <source>
        <dbReference type="HAMAP-Rule" id="MF_00137"/>
    </source>
</evidence>
<organism>
    <name type="scientific">Lactiplantibacillus plantarum (strain ATCC BAA-793 / NCIMB 8826 / WCFS1)</name>
    <name type="common">Lactobacillus plantarum</name>
    <dbReference type="NCBI Taxonomy" id="220668"/>
    <lineage>
        <taxon>Bacteria</taxon>
        <taxon>Bacillati</taxon>
        <taxon>Bacillota</taxon>
        <taxon>Bacilli</taxon>
        <taxon>Lactobacillales</taxon>
        <taxon>Lactobacillaceae</taxon>
        <taxon>Lactiplantibacillus</taxon>
    </lineage>
</organism>